<evidence type="ECO:0000255" key="1">
    <source>
        <dbReference type="HAMAP-Rule" id="MF_01554"/>
    </source>
</evidence>
<sequence>MGRLFGTDGVRGVANRELTAELALALGAAAARRLSRSGAPGRRVAVLGRDPRASGEMLEAAVIAGLTSEGVDALRVGVLPTPAVAYLTGAYDADFGVMISASHNPMPDNGIKIFGPGGHKLDDDTEDQIEDLVLGVSRGPGLRPAGAGIGRVIDAEDATERYLRHVAKAATARLDDLAVVVDCAHGAASSAAPRAYRAAGARVIAINAEPNGRNINDGCGSTHLDPLRAAVLAHRADLGLAHDGDADRCLAVDANGDLVDGDAIMVVLALAMKEAGELACNTLVATVMSNLGLHLAMRSAGVTVRTTAVGDRYVLEELRAGDYSLGGEQSGHIVMPALGSTGDGIVTGLRLMTRMVQTGSSLSDLASAMRTLPQVLINVEVVDKATAAAAPSVRTAVEQAAAELGDTGRILLRPSGTEPMIRVMVEAADEGVAQRLAATVADAVSTAR</sequence>
<keyword id="KW-0413">Isomerase</keyword>
<keyword id="KW-0460">Magnesium</keyword>
<keyword id="KW-0479">Metal-binding</keyword>
<keyword id="KW-0597">Phosphoprotein</keyword>
<proteinExistence type="inferred from homology"/>
<feature type="chain" id="PRO_0000301341" description="Phosphoglucosamine mutase">
    <location>
        <begin position="1"/>
        <end position="448"/>
    </location>
</feature>
<feature type="active site" description="Phosphoserine intermediate" evidence="1">
    <location>
        <position position="102"/>
    </location>
</feature>
<feature type="binding site" description="via phosphate group" evidence="1">
    <location>
        <position position="102"/>
    </location>
    <ligand>
        <name>Mg(2+)</name>
        <dbReference type="ChEBI" id="CHEBI:18420"/>
    </ligand>
</feature>
<feature type="binding site" evidence="1">
    <location>
        <position position="243"/>
    </location>
    <ligand>
        <name>Mg(2+)</name>
        <dbReference type="ChEBI" id="CHEBI:18420"/>
    </ligand>
</feature>
<feature type="binding site" evidence="1">
    <location>
        <position position="245"/>
    </location>
    <ligand>
        <name>Mg(2+)</name>
        <dbReference type="ChEBI" id="CHEBI:18420"/>
    </ligand>
</feature>
<feature type="binding site" evidence="1">
    <location>
        <position position="247"/>
    </location>
    <ligand>
        <name>Mg(2+)</name>
        <dbReference type="ChEBI" id="CHEBI:18420"/>
    </ligand>
</feature>
<feature type="modified residue" description="Phosphoserine" evidence="1">
    <location>
        <position position="102"/>
    </location>
</feature>
<name>GLMM_MYCBP</name>
<protein>
    <recommendedName>
        <fullName evidence="1">Phosphoglucosamine mutase</fullName>
        <ecNumber evidence="1">5.4.2.10</ecNumber>
    </recommendedName>
</protein>
<accession>A1KPC8</accession>
<gene>
    <name evidence="1" type="primary">glmM</name>
    <name type="ordered locus">BCG_3507c</name>
</gene>
<dbReference type="EC" id="5.4.2.10" evidence="1"/>
<dbReference type="EMBL" id="AM408590">
    <property type="protein sequence ID" value="CAL73496.1"/>
    <property type="molecule type" value="Genomic_DNA"/>
</dbReference>
<dbReference type="RefSeq" id="WP_003418304.1">
    <property type="nucleotide sequence ID" value="NC_008769.1"/>
</dbReference>
<dbReference type="SMR" id="A1KPC8"/>
<dbReference type="KEGG" id="mbb:BCG_3507c"/>
<dbReference type="HOGENOM" id="CLU_016950_7_0_11"/>
<dbReference type="Proteomes" id="UP000001472">
    <property type="component" value="Chromosome"/>
</dbReference>
<dbReference type="GO" id="GO:0005829">
    <property type="term" value="C:cytosol"/>
    <property type="evidence" value="ECO:0007669"/>
    <property type="project" value="TreeGrafter"/>
</dbReference>
<dbReference type="GO" id="GO:0000287">
    <property type="term" value="F:magnesium ion binding"/>
    <property type="evidence" value="ECO:0007669"/>
    <property type="project" value="UniProtKB-UniRule"/>
</dbReference>
<dbReference type="GO" id="GO:0008966">
    <property type="term" value="F:phosphoglucosamine mutase activity"/>
    <property type="evidence" value="ECO:0007669"/>
    <property type="project" value="UniProtKB-UniRule"/>
</dbReference>
<dbReference type="GO" id="GO:0004615">
    <property type="term" value="F:phosphomannomutase activity"/>
    <property type="evidence" value="ECO:0007669"/>
    <property type="project" value="TreeGrafter"/>
</dbReference>
<dbReference type="GO" id="GO:0005975">
    <property type="term" value="P:carbohydrate metabolic process"/>
    <property type="evidence" value="ECO:0007669"/>
    <property type="project" value="InterPro"/>
</dbReference>
<dbReference type="GO" id="GO:0009252">
    <property type="term" value="P:peptidoglycan biosynthetic process"/>
    <property type="evidence" value="ECO:0007669"/>
    <property type="project" value="TreeGrafter"/>
</dbReference>
<dbReference type="GO" id="GO:0006048">
    <property type="term" value="P:UDP-N-acetylglucosamine biosynthetic process"/>
    <property type="evidence" value="ECO:0007669"/>
    <property type="project" value="TreeGrafter"/>
</dbReference>
<dbReference type="CDD" id="cd05802">
    <property type="entry name" value="GlmM"/>
    <property type="match status" value="1"/>
</dbReference>
<dbReference type="FunFam" id="3.30.310.50:FF:000001">
    <property type="entry name" value="Phosphoglucosamine mutase"/>
    <property type="match status" value="1"/>
</dbReference>
<dbReference type="FunFam" id="3.40.120.10:FF:000001">
    <property type="entry name" value="Phosphoglucosamine mutase"/>
    <property type="match status" value="1"/>
</dbReference>
<dbReference type="FunFam" id="3.40.120.10:FF:000002">
    <property type="entry name" value="Phosphoglucosamine mutase"/>
    <property type="match status" value="1"/>
</dbReference>
<dbReference type="Gene3D" id="3.40.120.10">
    <property type="entry name" value="Alpha-D-Glucose-1,6-Bisphosphate, subunit A, domain 3"/>
    <property type="match status" value="3"/>
</dbReference>
<dbReference type="Gene3D" id="3.30.310.50">
    <property type="entry name" value="Alpha-D-phosphohexomutase, C-terminal domain"/>
    <property type="match status" value="1"/>
</dbReference>
<dbReference type="HAMAP" id="MF_01554_B">
    <property type="entry name" value="GlmM_B"/>
    <property type="match status" value="1"/>
</dbReference>
<dbReference type="InterPro" id="IPR005844">
    <property type="entry name" value="A-D-PHexomutase_a/b/a-I"/>
</dbReference>
<dbReference type="InterPro" id="IPR016055">
    <property type="entry name" value="A-D-PHexomutase_a/b/a-I/II/III"/>
</dbReference>
<dbReference type="InterPro" id="IPR005845">
    <property type="entry name" value="A-D-PHexomutase_a/b/a-II"/>
</dbReference>
<dbReference type="InterPro" id="IPR005846">
    <property type="entry name" value="A-D-PHexomutase_a/b/a-III"/>
</dbReference>
<dbReference type="InterPro" id="IPR005843">
    <property type="entry name" value="A-D-PHexomutase_C"/>
</dbReference>
<dbReference type="InterPro" id="IPR036900">
    <property type="entry name" value="A-D-PHexomutase_C_sf"/>
</dbReference>
<dbReference type="InterPro" id="IPR016066">
    <property type="entry name" value="A-D-PHexomutase_CS"/>
</dbReference>
<dbReference type="InterPro" id="IPR005841">
    <property type="entry name" value="Alpha-D-phosphohexomutase_SF"/>
</dbReference>
<dbReference type="InterPro" id="IPR006352">
    <property type="entry name" value="GlmM_bact"/>
</dbReference>
<dbReference type="InterPro" id="IPR050060">
    <property type="entry name" value="Phosphoglucosamine_mutase"/>
</dbReference>
<dbReference type="NCBIfam" id="TIGR01455">
    <property type="entry name" value="glmM"/>
    <property type="match status" value="1"/>
</dbReference>
<dbReference type="PANTHER" id="PTHR42946:SF1">
    <property type="entry name" value="PHOSPHOGLUCOMUTASE (ALPHA-D-GLUCOSE-1,6-BISPHOSPHATE-DEPENDENT)"/>
    <property type="match status" value="1"/>
</dbReference>
<dbReference type="PANTHER" id="PTHR42946">
    <property type="entry name" value="PHOSPHOHEXOSE MUTASE"/>
    <property type="match status" value="1"/>
</dbReference>
<dbReference type="Pfam" id="PF02878">
    <property type="entry name" value="PGM_PMM_I"/>
    <property type="match status" value="1"/>
</dbReference>
<dbReference type="Pfam" id="PF02879">
    <property type="entry name" value="PGM_PMM_II"/>
    <property type="match status" value="1"/>
</dbReference>
<dbReference type="Pfam" id="PF02880">
    <property type="entry name" value="PGM_PMM_III"/>
    <property type="match status" value="1"/>
</dbReference>
<dbReference type="Pfam" id="PF00408">
    <property type="entry name" value="PGM_PMM_IV"/>
    <property type="match status" value="1"/>
</dbReference>
<dbReference type="PRINTS" id="PR00509">
    <property type="entry name" value="PGMPMM"/>
</dbReference>
<dbReference type="SUPFAM" id="SSF55957">
    <property type="entry name" value="Phosphoglucomutase, C-terminal domain"/>
    <property type="match status" value="1"/>
</dbReference>
<dbReference type="SUPFAM" id="SSF53738">
    <property type="entry name" value="Phosphoglucomutase, first 3 domains"/>
    <property type="match status" value="3"/>
</dbReference>
<dbReference type="PROSITE" id="PS00710">
    <property type="entry name" value="PGM_PMM"/>
    <property type="match status" value="1"/>
</dbReference>
<reference key="1">
    <citation type="journal article" date="2007" name="Proc. Natl. Acad. Sci. U.S.A.">
        <title>Genome plasticity of BCG and impact on vaccine efficacy.</title>
        <authorList>
            <person name="Brosch R."/>
            <person name="Gordon S.V."/>
            <person name="Garnier T."/>
            <person name="Eiglmeier K."/>
            <person name="Frigui W."/>
            <person name="Valenti P."/>
            <person name="Dos Santos S."/>
            <person name="Duthoy S."/>
            <person name="Lacroix C."/>
            <person name="Garcia-Pelayo C."/>
            <person name="Inwald J.K."/>
            <person name="Golby P."/>
            <person name="Garcia J.N."/>
            <person name="Hewinson R.G."/>
            <person name="Behr M.A."/>
            <person name="Quail M.A."/>
            <person name="Churcher C."/>
            <person name="Barrell B.G."/>
            <person name="Parkhill J."/>
            <person name="Cole S.T."/>
        </authorList>
    </citation>
    <scope>NUCLEOTIDE SEQUENCE [LARGE SCALE GENOMIC DNA]</scope>
    <source>
        <strain>BCG / Pasteur 1173P2</strain>
    </source>
</reference>
<organism>
    <name type="scientific">Mycobacterium bovis (strain BCG / Pasteur 1173P2)</name>
    <dbReference type="NCBI Taxonomy" id="410289"/>
    <lineage>
        <taxon>Bacteria</taxon>
        <taxon>Bacillati</taxon>
        <taxon>Actinomycetota</taxon>
        <taxon>Actinomycetes</taxon>
        <taxon>Mycobacteriales</taxon>
        <taxon>Mycobacteriaceae</taxon>
        <taxon>Mycobacterium</taxon>
        <taxon>Mycobacterium tuberculosis complex</taxon>
    </lineage>
</organism>
<comment type="function">
    <text evidence="1">Catalyzes the conversion of glucosamine-6-phosphate to glucosamine-1-phosphate.</text>
</comment>
<comment type="catalytic activity">
    <reaction evidence="1">
        <text>alpha-D-glucosamine 1-phosphate = D-glucosamine 6-phosphate</text>
        <dbReference type="Rhea" id="RHEA:23424"/>
        <dbReference type="ChEBI" id="CHEBI:58516"/>
        <dbReference type="ChEBI" id="CHEBI:58725"/>
        <dbReference type="EC" id="5.4.2.10"/>
    </reaction>
</comment>
<comment type="cofactor">
    <cofactor evidence="1">
        <name>Mg(2+)</name>
        <dbReference type="ChEBI" id="CHEBI:18420"/>
    </cofactor>
    <text evidence="1">Binds 1 Mg(2+) ion per subunit.</text>
</comment>
<comment type="PTM">
    <text evidence="1">Activated by phosphorylation.</text>
</comment>
<comment type="similarity">
    <text evidence="1">Belongs to the phosphohexose mutase family.</text>
</comment>